<name>RBFA_PHYMT</name>
<sequence>MGLTNEKLASLIKKELALIINVSIRNNKIGFINVTEVKLTNDLSFANVYYVILNNQPEFLSLAAEIIEKNKSTIRMLLAKKIRNIRKIPELVFIYDTSLEYGNHIDNILKGINK</sequence>
<accession>B3QZW6</accession>
<keyword id="KW-0963">Cytoplasm</keyword>
<keyword id="KW-1185">Reference proteome</keyword>
<keyword id="KW-0690">Ribosome biogenesis</keyword>
<feature type="chain" id="PRO_1000201647" description="Ribosome-binding factor A">
    <location>
        <begin position="1"/>
        <end position="114"/>
    </location>
</feature>
<reference key="1">
    <citation type="journal article" date="2008" name="BMC Genomics">
        <title>The linear chromosome of the plant-pathogenic mycoplasma 'Candidatus Phytoplasma mali'.</title>
        <authorList>
            <person name="Kube M."/>
            <person name="Schneider B."/>
            <person name="Kuhl H."/>
            <person name="Dandekar T."/>
            <person name="Heitmann K."/>
            <person name="Migdoll A.M."/>
            <person name="Reinhardt R."/>
            <person name="Seemueller E."/>
        </authorList>
    </citation>
    <scope>NUCLEOTIDE SEQUENCE [LARGE SCALE GENOMIC DNA]</scope>
    <source>
        <strain>AT</strain>
    </source>
</reference>
<comment type="function">
    <text evidence="1">One of several proteins that assist in the late maturation steps of the functional core of the 30S ribosomal subunit. Associates with free 30S ribosomal subunits (but not with 30S subunits that are part of 70S ribosomes or polysomes). Required for efficient processing of 16S rRNA. May interact with the 5'-terminal helix region of 16S rRNA.</text>
</comment>
<comment type="subunit">
    <text evidence="1">Monomer. Binds 30S ribosomal subunits, but not 50S ribosomal subunits or 70S ribosomes.</text>
</comment>
<comment type="subcellular location">
    <subcellularLocation>
        <location evidence="1">Cytoplasm</location>
    </subcellularLocation>
</comment>
<comment type="similarity">
    <text evidence="1">Belongs to the RbfA family.</text>
</comment>
<dbReference type="EMBL" id="CU469464">
    <property type="protein sequence ID" value="CAP18503.1"/>
    <property type="molecule type" value="Genomic_DNA"/>
</dbReference>
<dbReference type="SMR" id="B3QZW6"/>
<dbReference type="STRING" id="37692.ATP_00316"/>
<dbReference type="KEGG" id="pml:ATP_00316"/>
<dbReference type="eggNOG" id="COG0858">
    <property type="taxonomic scope" value="Bacteria"/>
</dbReference>
<dbReference type="HOGENOM" id="CLU_089475_3_1_14"/>
<dbReference type="Proteomes" id="UP000002020">
    <property type="component" value="Chromosome"/>
</dbReference>
<dbReference type="GO" id="GO:0005829">
    <property type="term" value="C:cytosol"/>
    <property type="evidence" value="ECO:0007669"/>
    <property type="project" value="TreeGrafter"/>
</dbReference>
<dbReference type="GO" id="GO:0043024">
    <property type="term" value="F:ribosomal small subunit binding"/>
    <property type="evidence" value="ECO:0007669"/>
    <property type="project" value="TreeGrafter"/>
</dbReference>
<dbReference type="GO" id="GO:0030490">
    <property type="term" value="P:maturation of SSU-rRNA"/>
    <property type="evidence" value="ECO:0007669"/>
    <property type="project" value="UniProtKB-UniRule"/>
</dbReference>
<dbReference type="Gene3D" id="3.30.300.20">
    <property type="match status" value="1"/>
</dbReference>
<dbReference type="HAMAP" id="MF_00003">
    <property type="entry name" value="RbfA"/>
    <property type="match status" value="1"/>
</dbReference>
<dbReference type="InterPro" id="IPR015946">
    <property type="entry name" value="KH_dom-like_a/b"/>
</dbReference>
<dbReference type="InterPro" id="IPR000238">
    <property type="entry name" value="RbfA"/>
</dbReference>
<dbReference type="InterPro" id="IPR023799">
    <property type="entry name" value="RbfA_dom_sf"/>
</dbReference>
<dbReference type="InterPro" id="IPR020053">
    <property type="entry name" value="Ribosome-bd_factorA_CS"/>
</dbReference>
<dbReference type="NCBIfam" id="TIGR00082">
    <property type="entry name" value="rbfA"/>
    <property type="match status" value="1"/>
</dbReference>
<dbReference type="PANTHER" id="PTHR33515">
    <property type="entry name" value="RIBOSOME-BINDING FACTOR A, CHLOROPLASTIC-RELATED"/>
    <property type="match status" value="1"/>
</dbReference>
<dbReference type="PANTHER" id="PTHR33515:SF1">
    <property type="entry name" value="RIBOSOME-BINDING FACTOR A, CHLOROPLASTIC-RELATED"/>
    <property type="match status" value="1"/>
</dbReference>
<dbReference type="Pfam" id="PF02033">
    <property type="entry name" value="RBFA"/>
    <property type="match status" value="1"/>
</dbReference>
<dbReference type="SUPFAM" id="SSF89919">
    <property type="entry name" value="Ribosome-binding factor A, RbfA"/>
    <property type="match status" value="1"/>
</dbReference>
<dbReference type="PROSITE" id="PS01319">
    <property type="entry name" value="RBFA"/>
    <property type="match status" value="1"/>
</dbReference>
<evidence type="ECO:0000255" key="1">
    <source>
        <dbReference type="HAMAP-Rule" id="MF_00003"/>
    </source>
</evidence>
<organism>
    <name type="scientific">Phytoplasma mali (strain AT)</name>
    <dbReference type="NCBI Taxonomy" id="482235"/>
    <lineage>
        <taxon>Bacteria</taxon>
        <taxon>Bacillati</taxon>
        <taxon>Mycoplasmatota</taxon>
        <taxon>Mollicutes</taxon>
        <taxon>Acholeplasmatales</taxon>
        <taxon>Acholeplasmataceae</taxon>
        <taxon>Candidatus Phytoplasma</taxon>
        <taxon>16SrX (Apple proliferation group)</taxon>
    </lineage>
</organism>
<protein>
    <recommendedName>
        <fullName evidence="1">Ribosome-binding factor A</fullName>
    </recommendedName>
</protein>
<proteinExistence type="inferred from homology"/>
<gene>
    <name evidence="1" type="primary">rbfA</name>
    <name type="ordered locus">ATP_00316</name>
</gene>